<accession>P0DO23</accession>
<accession>Q9LV19</accession>
<name>CP2_ARATH</name>
<keyword id="KW-0223">Dioxygenase</keyword>
<keyword id="KW-0408">Iron</keyword>
<keyword id="KW-0479">Metal-binding</keyword>
<keyword id="KW-0539">Nucleus</keyword>
<keyword id="KW-0560">Oxidoreductase</keyword>
<keyword id="KW-1185">Reference proteome</keyword>
<keyword id="KW-0847">Vitamin C</keyword>
<gene>
    <name evidence="5" type="primary">CP2</name>
    <name evidence="7" type="ordered locus">At3g18210</name>
    <name evidence="8" type="ORF">MRC8.20</name>
</gene>
<reference key="1">
    <citation type="journal article" date="2000" name="DNA Res.">
        <title>Structural analysis of Arabidopsis thaliana chromosome 3. II. Sequence features of the 4,251,695 bp regions covered by 90 P1, TAC and BAC clones.</title>
        <authorList>
            <person name="Kaneko T."/>
            <person name="Katoh T."/>
            <person name="Sato S."/>
            <person name="Nakamura Y."/>
            <person name="Asamizu E."/>
            <person name="Tabata S."/>
        </authorList>
    </citation>
    <scope>NUCLEOTIDE SEQUENCE [LARGE SCALE GENOMIC DNA]</scope>
    <source>
        <strain>cv. Columbia</strain>
    </source>
</reference>
<reference key="2">
    <citation type="journal article" date="2017" name="Plant J.">
        <title>Araport11: a complete reannotation of the Arabidopsis thaliana reference genome.</title>
        <authorList>
            <person name="Cheng C.Y."/>
            <person name="Krishnakumar V."/>
            <person name="Chan A.P."/>
            <person name="Thibaud-Nissen F."/>
            <person name="Schobel S."/>
            <person name="Town C.D."/>
        </authorList>
    </citation>
    <scope>GENOME REANNOTATION</scope>
    <source>
        <strain>cv. Columbia</strain>
    </source>
</reference>
<reference key="3">
    <citation type="journal article" date="2003" name="Science">
        <title>Empirical analysis of transcriptional activity in the Arabidopsis genome.</title>
        <authorList>
            <person name="Yamada K."/>
            <person name="Lim J."/>
            <person name="Dale J.M."/>
            <person name="Chen H."/>
            <person name="Shinn P."/>
            <person name="Palm C.J."/>
            <person name="Southwick A.M."/>
            <person name="Wu H.C."/>
            <person name="Kim C.J."/>
            <person name="Nguyen M."/>
            <person name="Pham P.K."/>
            <person name="Cheuk R.F."/>
            <person name="Karlin-Newmann G."/>
            <person name="Liu S.X."/>
            <person name="Lam B."/>
            <person name="Sakano H."/>
            <person name="Wu T."/>
            <person name="Yu G."/>
            <person name="Miranda M."/>
            <person name="Quach H.L."/>
            <person name="Tripp M."/>
            <person name="Chang C.H."/>
            <person name="Lee J.M."/>
            <person name="Toriumi M.J."/>
            <person name="Chan M.M."/>
            <person name="Tang C.C."/>
            <person name="Onodera C.S."/>
            <person name="Deng J.M."/>
            <person name="Akiyama K."/>
            <person name="Ansari Y."/>
            <person name="Arakawa T."/>
            <person name="Banh J."/>
            <person name="Banno F."/>
            <person name="Bowser L."/>
            <person name="Brooks S.Y."/>
            <person name="Carninci P."/>
            <person name="Chao Q."/>
            <person name="Choy N."/>
            <person name="Enju A."/>
            <person name="Goldsmith A.D."/>
            <person name="Gurjal M."/>
            <person name="Hansen N.F."/>
            <person name="Hayashizaki Y."/>
            <person name="Johnson-Hopson C."/>
            <person name="Hsuan V.W."/>
            <person name="Iida K."/>
            <person name="Karnes M."/>
            <person name="Khan S."/>
            <person name="Koesema E."/>
            <person name="Ishida J."/>
            <person name="Jiang P.X."/>
            <person name="Jones T."/>
            <person name="Kawai J."/>
            <person name="Kamiya A."/>
            <person name="Meyers C."/>
            <person name="Nakajima M."/>
            <person name="Narusaka M."/>
            <person name="Seki M."/>
            <person name="Sakurai T."/>
            <person name="Satou M."/>
            <person name="Tamse R."/>
            <person name="Vaysberg M."/>
            <person name="Wallender E.K."/>
            <person name="Wong C."/>
            <person name="Yamamura Y."/>
            <person name="Yuan S."/>
            <person name="Shinozaki K."/>
            <person name="Davis R.W."/>
            <person name="Theologis A."/>
            <person name="Ecker J.R."/>
        </authorList>
    </citation>
    <scope>NUCLEOTIDE SEQUENCE [LARGE SCALE MRNA]</scope>
    <source>
        <strain>cv. Columbia</strain>
    </source>
</reference>
<reference key="4">
    <citation type="journal article" date="2018" name="Plant Cell">
        <title>INCURVATA11 and CUPULIFORMIS2 are redundant genes that encode epigenetic machinery components in Arabidopsis.</title>
        <authorList>
            <person name="Mateo-Bonmati E."/>
            <person name="Esteve-Bruna D."/>
            <person name="Juan-Vicente L."/>
            <person name="Nadi R."/>
            <person name="Candela H."/>
            <person name="Lozano F.M."/>
            <person name="Ponce M.R."/>
            <person name="Perez-Perez J.M."/>
            <person name="Micol J.L."/>
        </authorList>
    </citation>
    <scope>FUNCTION</scope>
    <scope>SUBCELLULAR LOCATION</scope>
    <scope>TISSUE SPECIFICITY</scope>
    <scope>DISRUPTION PHENOTYPE</scope>
</reference>
<comment type="function">
    <text evidence="4">Participates in the epigenetic repression of flowering genes in association with ICU11 (PubMed:29915151). Functions in the repression of several members of the MADS-box transcription factors family, including SEP3, during vegetative development via histone modification (PubMed:29915151).</text>
</comment>
<comment type="cofactor">
    <cofactor evidence="2">
        <name>Fe(2+)</name>
        <dbReference type="ChEBI" id="CHEBI:29033"/>
    </cofactor>
    <text evidence="2">Binds 1 Fe(2+) ion per subunit.</text>
</comment>
<comment type="cofactor">
    <cofactor evidence="1">
        <name>L-ascorbate</name>
        <dbReference type="ChEBI" id="CHEBI:38290"/>
    </cofactor>
</comment>
<comment type="interaction">
    <interactant intactId="EBI-4428219">
        <id>P0DO23</id>
    </interactant>
    <interactant intactId="EBI-4448936">
        <id>Q8H1P9</id>
        <label>MYB3R3</label>
    </interactant>
    <organismsDiffer>false</organismsDiffer>
    <experiments>3</experiments>
</comment>
<comment type="interaction">
    <interactant intactId="EBI-4428219">
        <id>P0DO23</id>
    </interactant>
    <interactant intactId="EBI-25506855">
        <id>O23160</id>
        <label>MYB73</label>
    </interactant>
    <organismsDiffer>false</organismsDiffer>
    <experiments>3</experiments>
</comment>
<comment type="interaction">
    <interactant intactId="EBI-4428219">
        <id>P0DO23</id>
    </interactant>
    <interactant intactId="EBI-541366">
        <id>Q39234</id>
        <label>TGA3</label>
    </interactant>
    <organismsDiffer>false</organismsDiffer>
    <experiments>3</experiments>
</comment>
<comment type="subcellular location">
    <subcellularLocation>
        <location evidence="4">Nucleus</location>
        <location evidence="4">Nucleoplasm</location>
    </subcellularLocation>
</comment>
<comment type="tissue specificity">
    <text evidence="4">Expressed in roots, cotyledons, rosette leaves, cauline leaves, inflorescences and siliques.</text>
</comment>
<comment type="disruption phenotype">
    <text evidence="4">No visible phenotype under normal growth conditions (PubMed:29915151). The double mutant seedlings icu11 and cp2 skip the vegetative phase, flower immediately after germination and then die (PubMed:29915151).</text>
</comment>
<organism>
    <name type="scientific">Arabidopsis thaliana</name>
    <name type="common">Mouse-ear cress</name>
    <dbReference type="NCBI Taxonomy" id="3702"/>
    <lineage>
        <taxon>Eukaryota</taxon>
        <taxon>Viridiplantae</taxon>
        <taxon>Streptophyta</taxon>
        <taxon>Embryophyta</taxon>
        <taxon>Tracheophyta</taxon>
        <taxon>Spermatophyta</taxon>
        <taxon>Magnoliopsida</taxon>
        <taxon>eudicotyledons</taxon>
        <taxon>Gunneridae</taxon>
        <taxon>Pentapetalae</taxon>
        <taxon>rosids</taxon>
        <taxon>malvids</taxon>
        <taxon>Brassicales</taxon>
        <taxon>Brassicaceae</taxon>
        <taxon>Camelineae</taxon>
        <taxon>Arabidopsis</taxon>
    </lineage>
</organism>
<protein>
    <recommendedName>
        <fullName evidence="6">2-oxoglutarate and iron-dependent oxygenase domain-containing protein CP2</fullName>
        <ecNumber evidence="2">1.14.11.-</ecNumber>
    </recommendedName>
    <alternativeName>
        <fullName evidence="5">Protein CUPULIFORMIS 2</fullName>
    </alternativeName>
</protein>
<sequence>MSSEQREGSQETTTTTVEGNGTIAGQNSHSAAPTTLRATSTMVSCQRLRLNPNNEHRPDSYEDLQLDFPNSVYSSLEKYLPPNMLVSNRDEKIKFMTDIMLRHLPHGERSRAQRHSDYRLKITTNYQPLHKELYTLVPTVCFVPAFLKAINENTEESFRNIISEPSPGVFVFDMLQPSFCEMMLAEIDNFERWVGETKFRIMRPNTMNKYGAVLDDFGLDTMLDKLMEGFIRPISKVFFSDVGGATLDSHHGFVVEYGKDRDVDLGFHVDDSEVTLNVCLGNQFVGGELFFRGTRCEKHVNTATKADETYDYCHIPGQAVLHRGRHRHGARATTCGHRVNMLLWCRSSVFRELKTHHKDFSSWCGECFCEKRDEKVRSIDALRKKLFKPRQTQA</sequence>
<feature type="chain" id="PRO_0000449522" description="2-oxoglutarate and iron-dependent oxygenase domain-containing protein CP2">
    <location>
        <begin position="1"/>
        <end position="394"/>
    </location>
</feature>
<feature type="domain" description="Fe2OG dioxygenase" evidence="2">
    <location>
        <begin position="248"/>
        <end position="347"/>
    </location>
</feature>
<feature type="region of interest" description="Disordered" evidence="3">
    <location>
        <begin position="1"/>
        <end position="35"/>
    </location>
</feature>
<feature type="compositionally biased region" description="Polar residues" evidence="3">
    <location>
        <begin position="17"/>
        <end position="35"/>
    </location>
</feature>
<feature type="binding site" evidence="2">
    <location>
        <position position="268"/>
    </location>
    <ligand>
        <name>Fe cation</name>
        <dbReference type="ChEBI" id="CHEBI:24875"/>
    </ligand>
</feature>
<feature type="binding site" evidence="2">
    <location>
        <position position="270"/>
    </location>
    <ligand>
        <name>Fe cation</name>
        <dbReference type="ChEBI" id="CHEBI:24875"/>
    </ligand>
</feature>
<feature type="binding site" evidence="2">
    <location>
        <position position="328"/>
    </location>
    <ligand>
        <name>Fe cation</name>
        <dbReference type="ChEBI" id="CHEBI:24875"/>
    </ligand>
</feature>
<feature type="binding site" evidence="2">
    <location>
        <position position="338"/>
    </location>
    <ligand>
        <name>2-oxoglutarate</name>
        <dbReference type="ChEBI" id="CHEBI:16810"/>
    </ligand>
</feature>
<evidence type="ECO:0000250" key="1">
    <source>
        <dbReference type="UniProtKB" id="Q02809"/>
    </source>
</evidence>
<evidence type="ECO:0000255" key="2">
    <source>
        <dbReference type="PROSITE-ProRule" id="PRU00805"/>
    </source>
</evidence>
<evidence type="ECO:0000256" key="3">
    <source>
        <dbReference type="SAM" id="MobiDB-lite"/>
    </source>
</evidence>
<evidence type="ECO:0000269" key="4">
    <source>
    </source>
</evidence>
<evidence type="ECO:0000303" key="5">
    <source>
    </source>
</evidence>
<evidence type="ECO:0000305" key="6"/>
<evidence type="ECO:0000312" key="7">
    <source>
        <dbReference type="Araport" id="AT3G18210"/>
    </source>
</evidence>
<evidence type="ECO:0000312" key="8">
    <source>
        <dbReference type="EMBL" id="BAB02034.1"/>
    </source>
</evidence>
<proteinExistence type="evidence at protein level"/>
<dbReference type="EC" id="1.14.11.-" evidence="2"/>
<dbReference type="EMBL" id="AB020749">
    <property type="protein sequence ID" value="BAB02034.1"/>
    <property type="molecule type" value="Genomic_DNA"/>
</dbReference>
<dbReference type="EMBL" id="CP002686">
    <property type="protein sequence ID" value="AEE76064.1"/>
    <property type="molecule type" value="Genomic_DNA"/>
</dbReference>
<dbReference type="EMBL" id="CP002686">
    <property type="protein sequence ID" value="AEE76065.1"/>
    <property type="molecule type" value="Genomic_DNA"/>
</dbReference>
<dbReference type="EMBL" id="AF386971">
    <property type="protein sequence ID" value="AAK62416.1"/>
    <property type="molecule type" value="mRNA"/>
</dbReference>
<dbReference type="EMBL" id="BT008485">
    <property type="protein sequence ID" value="AAP37844.1"/>
    <property type="molecule type" value="mRNA"/>
</dbReference>
<dbReference type="RefSeq" id="NP_001078177.1">
    <property type="nucleotide sequence ID" value="NM_001084708.1"/>
</dbReference>
<dbReference type="RefSeq" id="NP_566600.1">
    <property type="nucleotide sequence ID" value="NM_112704.3"/>
</dbReference>
<dbReference type="SMR" id="P0DO23"/>
<dbReference type="FunCoup" id="P0DO23">
    <property type="interactions" value="2898"/>
</dbReference>
<dbReference type="IntAct" id="P0DO23">
    <property type="interactions" value="5"/>
</dbReference>
<dbReference type="PaxDb" id="3702-AT3G18210.1"/>
<dbReference type="ProteomicsDB" id="189930"/>
<dbReference type="EnsemblPlants" id="AT3G18210.1">
    <property type="protein sequence ID" value="AT3G18210.1"/>
    <property type="gene ID" value="AT3G18210"/>
</dbReference>
<dbReference type="EnsemblPlants" id="AT3G18210.2">
    <property type="protein sequence ID" value="AT3G18210.2"/>
    <property type="gene ID" value="AT3G18210"/>
</dbReference>
<dbReference type="GeneID" id="821348"/>
<dbReference type="Gramene" id="AT3G18210.1">
    <property type="protein sequence ID" value="AT3G18210.1"/>
    <property type="gene ID" value="AT3G18210"/>
</dbReference>
<dbReference type="Gramene" id="AT3G18210.2">
    <property type="protein sequence ID" value="AT3G18210.2"/>
    <property type="gene ID" value="AT3G18210"/>
</dbReference>
<dbReference type="KEGG" id="ath:AT3G18210"/>
<dbReference type="Araport" id="AT3G18210"/>
<dbReference type="TAIR" id="AT3G18210">
    <property type="gene designation" value="CP2"/>
</dbReference>
<dbReference type="eggNOG" id="KOG1971">
    <property type="taxonomic scope" value="Eukaryota"/>
</dbReference>
<dbReference type="HOGENOM" id="CLU_045835_0_0_1"/>
<dbReference type="InParanoid" id="P0DO23"/>
<dbReference type="OMA" id="HYKPLHK"/>
<dbReference type="OrthoDB" id="1736837at2759"/>
<dbReference type="PRO" id="PR:P0DO23"/>
<dbReference type="Proteomes" id="UP000006548">
    <property type="component" value="Chromosome 3"/>
</dbReference>
<dbReference type="ExpressionAtlas" id="P0DO23">
    <property type="expression patterns" value="baseline and differential"/>
</dbReference>
<dbReference type="GO" id="GO:0005654">
    <property type="term" value="C:nucleoplasm"/>
    <property type="evidence" value="ECO:0007669"/>
    <property type="project" value="UniProtKB-SubCell"/>
</dbReference>
<dbReference type="GO" id="GO:0005634">
    <property type="term" value="C:nucleus"/>
    <property type="evidence" value="ECO:0000314"/>
    <property type="project" value="TAIR"/>
</dbReference>
<dbReference type="GO" id="GO:0051213">
    <property type="term" value="F:dioxygenase activity"/>
    <property type="evidence" value="ECO:0007669"/>
    <property type="project" value="UniProtKB-KW"/>
</dbReference>
<dbReference type="GO" id="GO:0005506">
    <property type="term" value="F:iron ion binding"/>
    <property type="evidence" value="ECO:0007669"/>
    <property type="project" value="InterPro"/>
</dbReference>
<dbReference type="GO" id="GO:0031418">
    <property type="term" value="F:L-ascorbic acid binding"/>
    <property type="evidence" value="ECO:0007669"/>
    <property type="project" value="UniProtKB-KW"/>
</dbReference>
<dbReference type="GO" id="GO:0016705">
    <property type="term" value="F:oxidoreductase activity, acting on paired donors, with incorporation or reduction of molecular oxygen"/>
    <property type="evidence" value="ECO:0007669"/>
    <property type="project" value="InterPro"/>
</dbReference>
<dbReference type="InterPro" id="IPR005123">
    <property type="entry name" value="Oxoglu/Fe-dep_dioxygenase_dom"/>
</dbReference>
<dbReference type="InterPro" id="IPR006620">
    <property type="entry name" value="Pro_4_hyd_alph"/>
</dbReference>
<dbReference type="PANTHER" id="PTHR24014">
    <property type="entry name" value="2-OXOGLUTARATE AND IRON-DEPENDENT OXYGENASE DOMAIN-CONTAINING PROTEIN 2"/>
    <property type="match status" value="1"/>
</dbReference>
<dbReference type="PANTHER" id="PTHR24014:SF4">
    <property type="entry name" value="2-OXOGLUTARATE AND IRON-DEPENDENT OXYGENASE DOMAIN-CONTAINING PROTEIN 2"/>
    <property type="match status" value="1"/>
</dbReference>
<dbReference type="Pfam" id="PF25238">
    <property type="entry name" value="OGFOD2-like"/>
    <property type="match status" value="1"/>
</dbReference>
<dbReference type="SMART" id="SM00702">
    <property type="entry name" value="P4Hc"/>
    <property type="match status" value="1"/>
</dbReference>
<dbReference type="PROSITE" id="PS51471">
    <property type="entry name" value="FE2OG_OXY"/>
    <property type="match status" value="1"/>
</dbReference>